<comment type="function">
    <text evidence="7 8">Core component of the CTLH E3 ubiquitin-protein ligase complex that selectively accepts ubiquitin from UBE2H and mediates ubiquitination and subsequent proteasomal degradation of the transcription factor HBP1 (PubMed:29911972). Acts as a positive regulator of Wnt signaling pathway by promoting beta-catenin (CTNNB1) nuclear accumulation (PubMed:28829046).</text>
</comment>
<comment type="subunit">
    <text evidence="1 4 5 7 8">Homodimer; may also form higher oligomers (By similarity). Identified in the CTLH complex that contains GID4, RANBP9 and/or RANBP10, MKLN1, MAEA, RMND5A (or alternatively its paralog RMND5B), GID8, ARMC8, WDR26 and YPEL5 (PubMed:17467196, PubMed:29911972). Within this complex, MAEA, RMND5A (or alternatively its paralog RMND5B), GID8, WDR26, and RANBP9 and/or RANBP10 form the catalytic core, while GID4, MKLN1, ARMC8 and YPEL5 have ancillary roles (PubMed:29911972). Interacts with RANBP9. Part of a complex consisting of RANBP9, MKLN1 and GID8 (PubMed:12559565). Interacts with CTNNB1, AXIN1 and GSK3B (PubMed:28829046).</text>
</comment>
<comment type="interaction">
    <interactant intactId="EBI-1051077">
        <id>Q9NWU2</id>
    </interactant>
    <interactant intactId="EBI-11942961">
        <id>Q8IUR7-6</id>
        <label>ARMC8</label>
    </interactant>
    <organismsDiffer>false</organismsDiffer>
    <experiments>4</experiments>
</comment>
<comment type="interaction">
    <interactant intactId="EBI-1051077">
        <id>Q9NWU2</id>
    </interactant>
    <interactant intactId="EBI-2797992">
        <id>Q9H871</id>
        <label>RMND5A</label>
    </interactant>
    <organismsDiffer>false</organismsDiffer>
    <experiments>11</experiments>
</comment>
<comment type="subcellular location">
    <subcellularLocation>
        <location evidence="5 6 7">Cytoplasm</location>
    </subcellularLocation>
    <subcellularLocation>
        <location evidence="4 5 6 7 8">Nucleus</location>
    </subcellularLocation>
    <text evidence="7">Localizes in the cytoplasm in the absence of Wnt stimulation and in the nucleus in the presence of Wnt stimulation.</text>
</comment>
<comment type="tissue specificity">
    <text evidence="7">Up-regulated in colorectal cancer tissues (at protein level).</text>
</comment>
<comment type="PTM">
    <text evidence="7">Polyubiquitinated through 'Lys-48'-polyubiquitin chains, leading to proteasomal degradation in the absence of Wnt stimulation.</text>
</comment>
<comment type="similarity">
    <text evidence="12">Belongs to the GID8 family.</text>
</comment>
<accession>Q9NWU2</accession>
<accession>E1P5I3</accession>
<accession>Q8N5M5</accession>
<organism>
    <name type="scientific">Homo sapiens</name>
    <name type="common">Human</name>
    <dbReference type="NCBI Taxonomy" id="9606"/>
    <lineage>
        <taxon>Eukaryota</taxon>
        <taxon>Metazoa</taxon>
        <taxon>Chordata</taxon>
        <taxon>Craniata</taxon>
        <taxon>Vertebrata</taxon>
        <taxon>Euteleostomi</taxon>
        <taxon>Mammalia</taxon>
        <taxon>Eutheria</taxon>
        <taxon>Euarchontoglires</taxon>
        <taxon>Primates</taxon>
        <taxon>Haplorrhini</taxon>
        <taxon>Catarrhini</taxon>
        <taxon>Hominidae</taxon>
        <taxon>Homo</taxon>
    </lineage>
</organism>
<reference key="1">
    <citation type="journal article" date="2003" name="Gene">
        <title>A novel nuclear protein, Twa1, and Muskelin comprise a complex with RanBPM.</title>
        <authorList>
            <person name="Umeda M."/>
            <person name="Nishitani H."/>
            <person name="Nishimoto T."/>
        </authorList>
    </citation>
    <scope>NUCLEOTIDE SEQUENCE [MRNA]</scope>
    <scope>SUBCELLULAR LOCATION</scope>
    <scope>INTERACTION WITH RANBP9</scope>
    <scope>IDENTIFICATION IN A COMPLEX WITH MKLN1 AND RANBP9</scope>
</reference>
<reference key="2">
    <citation type="journal article" date="2004" name="Nat. Genet.">
        <title>Complete sequencing and characterization of 21,243 full-length human cDNAs.</title>
        <authorList>
            <person name="Ota T."/>
            <person name="Suzuki Y."/>
            <person name="Nishikawa T."/>
            <person name="Otsuki T."/>
            <person name="Sugiyama T."/>
            <person name="Irie R."/>
            <person name="Wakamatsu A."/>
            <person name="Hayashi K."/>
            <person name="Sato H."/>
            <person name="Nagai K."/>
            <person name="Kimura K."/>
            <person name="Makita H."/>
            <person name="Sekine M."/>
            <person name="Obayashi M."/>
            <person name="Nishi T."/>
            <person name="Shibahara T."/>
            <person name="Tanaka T."/>
            <person name="Ishii S."/>
            <person name="Yamamoto J."/>
            <person name="Saito K."/>
            <person name="Kawai Y."/>
            <person name="Isono Y."/>
            <person name="Nakamura Y."/>
            <person name="Nagahari K."/>
            <person name="Murakami K."/>
            <person name="Yasuda T."/>
            <person name="Iwayanagi T."/>
            <person name="Wagatsuma M."/>
            <person name="Shiratori A."/>
            <person name="Sudo H."/>
            <person name="Hosoiri T."/>
            <person name="Kaku Y."/>
            <person name="Kodaira H."/>
            <person name="Kondo H."/>
            <person name="Sugawara M."/>
            <person name="Takahashi M."/>
            <person name="Kanda K."/>
            <person name="Yokoi T."/>
            <person name="Furuya T."/>
            <person name="Kikkawa E."/>
            <person name="Omura Y."/>
            <person name="Abe K."/>
            <person name="Kamihara K."/>
            <person name="Katsuta N."/>
            <person name="Sato K."/>
            <person name="Tanikawa M."/>
            <person name="Yamazaki M."/>
            <person name="Ninomiya K."/>
            <person name="Ishibashi T."/>
            <person name="Yamashita H."/>
            <person name="Murakawa K."/>
            <person name="Fujimori K."/>
            <person name="Tanai H."/>
            <person name="Kimata M."/>
            <person name="Watanabe M."/>
            <person name="Hiraoka S."/>
            <person name="Chiba Y."/>
            <person name="Ishida S."/>
            <person name="Ono Y."/>
            <person name="Takiguchi S."/>
            <person name="Watanabe S."/>
            <person name="Yosida M."/>
            <person name="Hotuta T."/>
            <person name="Kusano J."/>
            <person name="Kanehori K."/>
            <person name="Takahashi-Fujii A."/>
            <person name="Hara H."/>
            <person name="Tanase T.-O."/>
            <person name="Nomura Y."/>
            <person name="Togiya S."/>
            <person name="Komai F."/>
            <person name="Hara R."/>
            <person name="Takeuchi K."/>
            <person name="Arita M."/>
            <person name="Imose N."/>
            <person name="Musashino K."/>
            <person name="Yuuki H."/>
            <person name="Oshima A."/>
            <person name="Sasaki N."/>
            <person name="Aotsuka S."/>
            <person name="Yoshikawa Y."/>
            <person name="Matsunawa H."/>
            <person name="Ichihara T."/>
            <person name="Shiohata N."/>
            <person name="Sano S."/>
            <person name="Moriya S."/>
            <person name="Momiyama H."/>
            <person name="Satoh N."/>
            <person name="Takami S."/>
            <person name="Terashima Y."/>
            <person name="Suzuki O."/>
            <person name="Nakagawa S."/>
            <person name="Senoh A."/>
            <person name="Mizoguchi H."/>
            <person name="Goto Y."/>
            <person name="Shimizu F."/>
            <person name="Wakebe H."/>
            <person name="Hishigaki H."/>
            <person name="Watanabe T."/>
            <person name="Sugiyama A."/>
            <person name="Takemoto M."/>
            <person name="Kawakami B."/>
            <person name="Yamazaki M."/>
            <person name="Watanabe K."/>
            <person name="Kumagai A."/>
            <person name="Itakura S."/>
            <person name="Fukuzumi Y."/>
            <person name="Fujimori Y."/>
            <person name="Komiyama M."/>
            <person name="Tashiro H."/>
            <person name="Tanigami A."/>
            <person name="Fujiwara T."/>
            <person name="Ono T."/>
            <person name="Yamada K."/>
            <person name="Fujii Y."/>
            <person name="Ozaki K."/>
            <person name="Hirao M."/>
            <person name="Ohmori Y."/>
            <person name="Kawabata A."/>
            <person name="Hikiji T."/>
            <person name="Kobatake N."/>
            <person name="Inagaki H."/>
            <person name="Ikema Y."/>
            <person name="Okamoto S."/>
            <person name="Okitani R."/>
            <person name="Kawakami T."/>
            <person name="Noguchi S."/>
            <person name="Itoh T."/>
            <person name="Shigeta K."/>
            <person name="Senba T."/>
            <person name="Matsumura K."/>
            <person name="Nakajima Y."/>
            <person name="Mizuno T."/>
            <person name="Morinaga M."/>
            <person name="Sasaki M."/>
            <person name="Togashi T."/>
            <person name="Oyama M."/>
            <person name="Hata H."/>
            <person name="Watanabe M."/>
            <person name="Komatsu T."/>
            <person name="Mizushima-Sugano J."/>
            <person name="Satoh T."/>
            <person name="Shirai Y."/>
            <person name="Takahashi Y."/>
            <person name="Nakagawa K."/>
            <person name="Okumura K."/>
            <person name="Nagase T."/>
            <person name="Nomura N."/>
            <person name="Kikuchi H."/>
            <person name="Masuho Y."/>
            <person name="Yamashita R."/>
            <person name="Nakai K."/>
            <person name="Yada T."/>
            <person name="Nakamura Y."/>
            <person name="Ohara O."/>
            <person name="Isogai T."/>
            <person name="Sugano S."/>
        </authorList>
    </citation>
    <scope>NUCLEOTIDE SEQUENCE [LARGE SCALE MRNA]</scope>
    <source>
        <tissue>Gastric carcinoma</tissue>
    </source>
</reference>
<reference key="3">
    <citation type="journal article" date="2001" name="Nature">
        <title>The DNA sequence and comparative analysis of human chromosome 20.</title>
        <authorList>
            <person name="Deloukas P."/>
            <person name="Matthews L.H."/>
            <person name="Ashurst J.L."/>
            <person name="Burton J."/>
            <person name="Gilbert J.G.R."/>
            <person name="Jones M."/>
            <person name="Stavrides G."/>
            <person name="Almeida J.P."/>
            <person name="Babbage A.K."/>
            <person name="Bagguley C.L."/>
            <person name="Bailey J."/>
            <person name="Barlow K.F."/>
            <person name="Bates K.N."/>
            <person name="Beard L.M."/>
            <person name="Beare D.M."/>
            <person name="Beasley O.P."/>
            <person name="Bird C.P."/>
            <person name="Blakey S.E."/>
            <person name="Bridgeman A.M."/>
            <person name="Brown A.J."/>
            <person name="Buck D."/>
            <person name="Burrill W.D."/>
            <person name="Butler A.P."/>
            <person name="Carder C."/>
            <person name="Carter N.P."/>
            <person name="Chapman J.C."/>
            <person name="Clamp M."/>
            <person name="Clark G."/>
            <person name="Clark L.N."/>
            <person name="Clark S.Y."/>
            <person name="Clee C.M."/>
            <person name="Clegg S."/>
            <person name="Cobley V.E."/>
            <person name="Collier R.E."/>
            <person name="Connor R.E."/>
            <person name="Corby N.R."/>
            <person name="Coulson A."/>
            <person name="Coville G.J."/>
            <person name="Deadman R."/>
            <person name="Dhami P.D."/>
            <person name="Dunn M."/>
            <person name="Ellington A.G."/>
            <person name="Frankland J.A."/>
            <person name="Fraser A."/>
            <person name="French L."/>
            <person name="Garner P."/>
            <person name="Grafham D.V."/>
            <person name="Griffiths C."/>
            <person name="Griffiths M.N.D."/>
            <person name="Gwilliam R."/>
            <person name="Hall R.E."/>
            <person name="Hammond S."/>
            <person name="Harley J.L."/>
            <person name="Heath P.D."/>
            <person name="Ho S."/>
            <person name="Holden J.L."/>
            <person name="Howden P.J."/>
            <person name="Huckle E."/>
            <person name="Hunt A.R."/>
            <person name="Hunt S.E."/>
            <person name="Jekosch K."/>
            <person name="Johnson C.M."/>
            <person name="Johnson D."/>
            <person name="Kay M.P."/>
            <person name="Kimberley A.M."/>
            <person name="King A."/>
            <person name="Knights A."/>
            <person name="Laird G.K."/>
            <person name="Lawlor S."/>
            <person name="Lehvaeslaiho M.H."/>
            <person name="Leversha M.A."/>
            <person name="Lloyd C."/>
            <person name="Lloyd D.M."/>
            <person name="Lovell J.D."/>
            <person name="Marsh V.L."/>
            <person name="Martin S.L."/>
            <person name="McConnachie L.J."/>
            <person name="McLay K."/>
            <person name="McMurray A.A."/>
            <person name="Milne S.A."/>
            <person name="Mistry D."/>
            <person name="Moore M.J.F."/>
            <person name="Mullikin J.C."/>
            <person name="Nickerson T."/>
            <person name="Oliver K."/>
            <person name="Parker A."/>
            <person name="Patel R."/>
            <person name="Pearce T.A.V."/>
            <person name="Peck A.I."/>
            <person name="Phillimore B.J.C.T."/>
            <person name="Prathalingam S.R."/>
            <person name="Plumb R.W."/>
            <person name="Ramsay H."/>
            <person name="Rice C.M."/>
            <person name="Ross M.T."/>
            <person name="Scott C.E."/>
            <person name="Sehra H.K."/>
            <person name="Shownkeen R."/>
            <person name="Sims S."/>
            <person name="Skuce C.D."/>
            <person name="Smith M.L."/>
            <person name="Soderlund C."/>
            <person name="Steward C.A."/>
            <person name="Sulston J.E."/>
            <person name="Swann R.M."/>
            <person name="Sycamore N."/>
            <person name="Taylor R."/>
            <person name="Tee L."/>
            <person name="Thomas D.W."/>
            <person name="Thorpe A."/>
            <person name="Tracey A."/>
            <person name="Tromans A.C."/>
            <person name="Vaudin M."/>
            <person name="Wall M."/>
            <person name="Wallis J.M."/>
            <person name="Whitehead S.L."/>
            <person name="Whittaker P."/>
            <person name="Willey D.L."/>
            <person name="Williams L."/>
            <person name="Williams S.A."/>
            <person name="Wilming L."/>
            <person name="Wray P.W."/>
            <person name="Hubbard T."/>
            <person name="Durbin R.M."/>
            <person name="Bentley D.R."/>
            <person name="Beck S."/>
            <person name="Rogers J."/>
        </authorList>
    </citation>
    <scope>NUCLEOTIDE SEQUENCE [LARGE SCALE GENOMIC DNA]</scope>
</reference>
<reference key="4">
    <citation type="submission" date="2005-09" db="EMBL/GenBank/DDBJ databases">
        <authorList>
            <person name="Mural R.J."/>
            <person name="Istrail S."/>
            <person name="Sutton G.G."/>
            <person name="Florea L."/>
            <person name="Halpern A.L."/>
            <person name="Mobarry C.M."/>
            <person name="Lippert R."/>
            <person name="Walenz B."/>
            <person name="Shatkay H."/>
            <person name="Dew I."/>
            <person name="Miller J.R."/>
            <person name="Flanigan M.J."/>
            <person name="Edwards N.J."/>
            <person name="Bolanos R."/>
            <person name="Fasulo D."/>
            <person name="Halldorsson B.V."/>
            <person name="Hannenhalli S."/>
            <person name="Turner R."/>
            <person name="Yooseph S."/>
            <person name="Lu F."/>
            <person name="Nusskern D.R."/>
            <person name="Shue B.C."/>
            <person name="Zheng X.H."/>
            <person name="Zhong F."/>
            <person name="Delcher A.L."/>
            <person name="Huson D.H."/>
            <person name="Kravitz S.A."/>
            <person name="Mouchard L."/>
            <person name="Reinert K."/>
            <person name="Remington K.A."/>
            <person name="Clark A.G."/>
            <person name="Waterman M.S."/>
            <person name="Eichler E.E."/>
            <person name="Adams M.D."/>
            <person name="Hunkapiller M.W."/>
            <person name="Myers E.W."/>
            <person name="Venter J.C."/>
        </authorList>
    </citation>
    <scope>NUCLEOTIDE SEQUENCE [LARGE SCALE GENOMIC DNA]</scope>
</reference>
<reference key="5">
    <citation type="journal article" date="2004" name="Genome Res.">
        <title>The status, quality, and expansion of the NIH full-length cDNA project: the Mammalian Gene Collection (MGC).</title>
        <authorList>
            <consortium name="The MGC Project Team"/>
        </authorList>
    </citation>
    <scope>NUCLEOTIDE SEQUENCE [LARGE SCALE MRNA]</scope>
    <source>
        <tissue>Muscle</tissue>
    </source>
</reference>
<reference key="6">
    <citation type="journal article" date="2007" name="Gene">
        <title>RanBPM, Muskelin, p48EMLP, p44CTLH, and the armadillo-repeat proteins ARMC8alpha and ARMC8beta are components of the CTLH complex.</title>
        <authorList>
            <person name="Kobayashi N."/>
            <person name="Yang J."/>
            <person name="Ueda A."/>
            <person name="Suzuki T."/>
            <person name="Tomaru K."/>
            <person name="Takeno M."/>
            <person name="Okuda K."/>
            <person name="Ishigatsubo Y."/>
        </authorList>
    </citation>
    <scope>IDENTIFICATION IN THE CTLH COMPLEX</scope>
    <scope>SUBCELLULAR LOCATION</scope>
</reference>
<reference key="7">
    <citation type="journal article" date="2011" name="BMC Syst. Biol.">
        <title>Initial characterization of the human central proteome.</title>
        <authorList>
            <person name="Burkard T.R."/>
            <person name="Planyavsky M."/>
            <person name="Kaupe I."/>
            <person name="Breitwieser F.P."/>
            <person name="Buerckstuemmer T."/>
            <person name="Bennett K.L."/>
            <person name="Superti-Furga G."/>
            <person name="Colinge J."/>
        </authorList>
    </citation>
    <scope>IDENTIFICATION BY MASS SPECTROMETRY [LARGE SCALE ANALYSIS]</scope>
</reference>
<reference key="8">
    <citation type="journal article" date="2013" name="J. Proteome Res.">
        <title>Toward a comprehensive characterization of a human cancer cell phosphoproteome.</title>
        <authorList>
            <person name="Zhou H."/>
            <person name="Di Palma S."/>
            <person name="Preisinger C."/>
            <person name="Peng M."/>
            <person name="Polat A.N."/>
            <person name="Heck A.J."/>
            <person name="Mohammed S."/>
        </authorList>
    </citation>
    <scope>IDENTIFICATION BY MASS SPECTROMETRY [LARGE SCALE ANALYSIS]</scope>
    <source>
        <tissue>Erythroleukemia</tissue>
    </source>
</reference>
<reference key="9">
    <citation type="journal article" date="2013" name="PLoS ONE">
        <title>Molecular phylogeny of a RING E3 ubiquitin ligase, conserved in eukaryotic cells and dominated by homologous components, the muskelin/RanBPM/CTLH complex.</title>
        <authorList>
            <person name="Francis O."/>
            <person name="Han F."/>
            <person name="Adams J.C."/>
        </authorList>
    </citation>
    <scope>SUBCELLULAR LOCATION</scope>
</reference>
<reference key="10">
    <citation type="journal article" date="2017" name="Cell Res.">
        <title>Twa1/Gid8 is a beta-catenin nuclear retention factor in Wnt signaling and colorectal tumorigenesis.</title>
        <authorList>
            <person name="Lu Y."/>
            <person name="Xie S."/>
            <person name="Zhang W."/>
            <person name="Zhang C."/>
            <person name="Gao C."/>
            <person name="Sun Q."/>
            <person name="Cai Y."/>
            <person name="Xu Z."/>
            <person name="Xiao M."/>
            <person name="Xu Y."/>
            <person name="Huang X."/>
            <person name="Wu X."/>
            <person name="Liu W."/>
            <person name="Wang F."/>
            <person name="Kang Y."/>
            <person name="Zhou T."/>
        </authorList>
    </citation>
    <scope>FUNCTION</scope>
    <scope>SUBCELLULAR LOCATION</scope>
    <scope>TISSUE SPECIFICITY</scope>
    <scope>INTERACTION WITH AXIN1; GSK3B AND CTNNB1</scope>
</reference>
<reference key="11">
    <citation type="journal article" date="2018" name="Elife">
        <title>The multi-subunit GID/CTLH E3 ligase promotes proliferation and targets the transcription factor Hbp1 for degradation.</title>
        <authorList>
            <person name="Lampert F."/>
            <person name="Stafa D."/>
            <person name="Goga A."/>
            <person name="Soste M.V."/>
            <person name="Gilberto S."/>
            <person name="Olieric N."/>
            <person name="Picotti P."/>
            <person name="Stoffel M."/>
            <person name="Peter M."/>
        </authorList>
    </citation>
    <scope>FUNCTION</scope>
    <scope>IDENTIFICATION IN THE CTLH COMPLEX</scope>
    <scope>IDENTIFICATION BY MASS SPECTROMETRY</scope>
    <scope>SUBCELLULAR LOCATION</scope>
</reference>
<protein>
    <recommendedName>
        <fullName>Glucose-induced degradation protein 8 homolog</fullName>
    </recommendedName>
    <alternativeName>
        <fullName evidence="11">Two hybrid-associated protein 1 with RanBPM</fullName>
        <shortName evidence="11">Twa1</shortName>
    </alternativeName>
</protein>
<sequence>MSYAEKPDEITKDEWMEKLNNLHVQRADMNRLIMNYLVTEGFKEAAEKFRMESGIEPSVDLETLDERIKIREMILKGQIQEAIALINSLHPELLDTNRYLYFHLQQQHLIELIRQRETEAALEFAQTQLAEQGEESRECLTEMERTLALLAFDSPEESPFGDLLHTMQRQKVWSEVNQAVLDYENRESTPKLAKLLKLLLWAQNELDQKKVKYPKMTDLSKGVIEEPK</sequence>
<keyword id="KW-0002">3D-structure</keyword>
<keyword id="KW-0963">Cytoplasm</keyword>
<keyword id="KW-0539">Nucleus</keyword>
<keyword id="KW-1267">Proteomics identification</keyword>
<keyword id="KW-1185">Reference proteome</keyword>
<keyword id="KW-0832">Ubl conjugation</keyword>
<keyword id="KW-0879">Wnt signaling pathway</keyword>
<name>GID8_HUMAN</name>
<proteinExistence type="evidence at protein level"/>
<gene>
    <name type="primary">GID8</name>
    <name type="synonym">C20orf11</name>
    <name evidence="9 10 11" type="synonym">TWA1</name>
</gene>
<evidence type="ECO:0000250" key="1">
    <source>
        <dbReference type="UniProtKB" id="Q9D7M1"/>
    </source>
</evidence>
<evidence type="ECO:0000255" key="2">
    <source>
        <dbReference type="PROSITE-ProRule" id="PRU00058"/>
    </source>
</evidence>
<evidence type="ECO:0000255" key="3">
    <source>
        <dbReference type="PROSITE-ProRule" id="PRU00126"/>
    </source>
</evidence>
<evidence type="ECO:0000269" key="4">
    <source>
    </source>
</evidence>
<evidence type="ECO:0000269" key="5">
    <source>
    </source>
</evidence>
<evidence type="ECO:0000269" key="6">
    <source>
    </source>
</evidence>
<evidence type="ECO:0000269" key="7">
    <source>
    </source>
</evidence>
<evidence type="ECO:0000269" key="8">
    <source>
    </source>
</evidence>
<evidence type="ECO:0000303" key="9">
    <source>
    </source>
</evidence>
<evidence type="ECO:0000303" key="10">
    <source>
    </source>
</evidence>
<evidence type="ECO:0000303" key="11">
    <source>
    </source>
</evidence>
<evidence type="ECO:0000305" key="12"/>
<evidence type="ECO:0007829" key="13">
    <source>
        <dbReference type="PDB" id="7NSC"/>
    </source>
</evidence>
<dbReference type="EMBL" id="AK000609">
    <property type="protein sequence ID" value="BAA91285.1"/>
    <property type="molecule type" value="mRNA"/>
</dbReference>
<dbReference type="EMBL" id="AL121673">
    <property type="status" value="NOT_ANNOTATED_CDS"/>
    <property type="molecule type" value="Genomic_DNA"/>
</dbReference>
<dbReference type="EMBL" id="CH471077">
    <property type="protein sequence ID" value="EAW75318.1"/>
    <property type="molecule type" value="Genomic_DNA"/>
</dbReference>
<dbReference type="EMBL" id="CH471077">
    <property type="protein sequence ID" value="EAW75319.1"/>
    <property type="molecule type" value="Genomic_DNA"/>
</dbReference>
<dbReference type="EMBL" id="BC032120">
    <property type="protein sequence ID" value="AAH32120.1"/>
    <property type="molecule type" value="mRNA"/>
</dbReference>
<dbReference type="CCDS" id="CCDS13510.1"/>
<dbReference type="RefSeq" id="NP_060366.1">
    <property type="nucleotide sequence ID" value="NM_017896.3"/>
</dbReference>
<dbReference type="RefSeq" id="XP_047296202.1">
    <property type="nucleotide sequence ID" value="XM_047440246.1"/>
</dbReference>
<dbReference type="RefSeq" id="XP_047296203.1">
    <property type="nucleotide sequence ID" value="XM_047440247.1"/>
</dbReference>
<dbReference type="RefSeq" id="XP_054179560.1">
    <property type="nucleotide sequence ID" value="XM_054323585.1"/>
</dbReference>
<dbReference type="PDB" id="7NSC">
    <property type="method" value="EM"/>
    <property type="resolution" value="3.30 A"/>
    <property type="chains" value="H=1-228"/>
</dbReference>
<dbReference type="PDBsum" id="7NSC"/>
<dbReference type="EMDB" id="EMD-12564"/>
<dbReference type="SMR" id="Q9NWU2"/>
<dbReference type="BioGRID" id="120327">
    <property type="interactions" value="156"/>
</dbReference>
<dbReference type="ComplexPortal" id="CPX-7901">
    <property type="entry name" value="GID E3 ubiquitin ligase complex, RMND5B-RANBP9 variant"/>
</dbReference>
<dbReference type="ComplexPortal" id="CPX-7902">
    <property type="entry name" value="GID E3 ubiquitin ligase complex, RMND5A-RANBP10 variant"/>
</dbReference>
<dbReference type="ComplexPortal" id="CPX-7903">
    <property type="entry name" value="GID E3 ubiquitin ligase complex, RMND5B-RANBP10 variant"/>
</dbReference>
<dbReference type="ComplexPortal" id="CPX-876">
    <property type="entry name" value="GID E3 ubiquitin ligase complex, RMND5A-RANBP9 variant"/>
</dbReference>
<dbReference type="CORUM" id="Q9NWU2"/>
<dbReference type="FunCoup" id="Q9NWU2">
    <property type="interactions" value="3812"/>
</dbReference>
<dbReference type="IntAct" id="Q9NWU2">
    <property type="interactions" value="98"/>
</dbReference>
<dbReference type="MINT" id="Q9NWU2"/>
<dbReference type="STRING" id="9606.ENSP00000266069"/>
<dbReference type="iPTMnet" id="Q9NWU2"/>
<dbReference type="PhosphoSitePlus" id="Q9NWU2"/>
<dbReference type="BioMuta" id="GID8"/>
<dbReference type="DMDM" id="28201788"/>
<dbReference type="jPOST" id="Q9NWU2"/>
<dbReference type="MassIVE" id="Q9NWU2"/>
<dbReference type="PaxDb" id="9606-ENSP00000266069"/>
<dbReference type="PeptideAtlas" id="Q9NWU2"/>
<dbReference type="ProteomicsDB" id="82982"/>
<dbReference type="Pumba" id="Q9NWU2"/>
<dbReference type="Antibodypedia" id="29626">
    <property type="antibodies" value="144 antibodies from 28 providers"/>
</dbReference>
<dbReference type="DNASU" id="54994"/>
<dbReference type="Ensembl" id="ENST00000266069.5">
    <property type="protein sequence ID" value="ENSP00000266069.3"/>
    <property type="gene ID" value="ENSG00000101193.8"/>
</dbReference>
<dbReference type="GeneID" id="54994"/>
<dbReference type="KEGG" id="hsa:54994"/>
<dbReference type="MANE-Select" id="ENST00000266069.5">
    <property type="protein sequence ID" value="ENSP00000266069.3"/>
    <property type="RefSeq nucleotide sequence ID" value="NM_017896.3"/>
    <property type="RefSeq protein sequence ID" value="NP_060366.1"/>
</dbReference>
<dbReference type="UCSC" id="uc002ydy.4">
    <property type="organism name" value="human"/>
</dbReference>
<dbReference type="AGR" id="HGNC:15857"/>
<dbReference type="CTD" id="54994"/>
<dbReference type="DisGeNET" id="54994"/>
<dbReference type="GeneCards" id="GID8"/>
<dbReference type="HGNC" id="HGNC:15857">
    <property type="gene designation" value="GID8"/>
</dbReference>
<dbReference type="HPA" id="ENSG00000101193">
    <property type="expression patterns" value="Low tissue specificity"/>
</dbReference>
<dbReference type="MIM" id="611625">
    <property type="type" value="gene"/>
</dbReference>
<dbReference type="neXtProt" id="NX_Q9NWU2"/>
<dbReference type="OpenTargets" id="ENSG00000101193"/>
<dbReference type="PharmGKB" id="PA25649"/>
<dbReference type="VEuPathDB" id="HostDB:ENSG00000101193"/>
<dbReference type="eggNOG" id="KOG2659">
    <property type="taxonomic scope" value="Eukaryota"/>
</dbReference>
<dbReference type="GeneTree" id="ENSGT00390000015162"/>
<dbReference type="HOGENOM" id="CLU_073203_1_0_1"/>
<dbReference type="InParanoid" id="Q9NWU2"/>
<dbReference type="OMA" id="KMILWAQ"/>
<dbReference type="OrthoDB" id="2415936at2759"/>
<dbReference type="PAN-GO" id="Q9NWU2">
    <property type="GO annotations" value="4 GO annotations based on evolutionary models"/>
</dbReference>
<dbReference type="PhylomeDB" id="Q9NWU2"/>
<dbReference type="TreeFam" id="TF300176"/>
<dbReference type="PathwayCommons" id="Q9NWU2"/>
<dbReference type="Reactome" id="R-HSA-9861718">
    <property type="pathway name" value="Regulation of pyruvate metabolism"/>
</dbReference>
<dbReference type="SignaLink" id="Q9NWU2"/>
<dbReference type="BioGRID-ORCS" id="54994">
    <property type="hits" value="69 hits in 1166 CRISPR screens"/>
</dbReference>
<dbReference type="ChiTaRS" id="GID8">
    <property type="organism name" value="human"/>
</dbReference>
<dbReference type="GenomeRNAi" id="54994"/>
<dbReference type="Pharos" id="Q9NWU2">
    <property type="development level" value="Tbio"/>
</dbReference>
<dbReference type="PRO" id="PR:Q9NWU2"/>
<dbReference type="Proteomes" id="UP000005640">
    <property type="component" value="Chromosome 20"/>
</dbReference>
<dbReference type="RNAct" id="Q9NWU2">
    <property type="molecule type" value="protein"/>
</dbReference>
<dbReference type="Bgee" id="ENSG00000101193">
    <property type="expression patterns" value="Expressed in esophagus squamous epithelium and 197 other cell types or tissues"/>
</dbReference>
<dbReference type="GO" id="GO:0030054">
    <property type="term" value="C:cell junction"/>
    <property type="evidence" value="ECO:0000314"/>
    <property type="project" value="HPA"/>
</dbReference>
<dbReference type="GO" id="GO:0005737">
    <property type="term" value="C:cytoplasm"/>
    <property type="evidence" value="ECO:0000314"/>
    <property type="project" value="UniProtKB"/>
</dbReference>
<dbReference type="GO" id="GO:0005829">
    <property type="term" value="C:cytosol"/>
    <property type="evidence" value="ECO:0000314"/>
    <property type="project" value="UniProtKB"/>
</dbReference>
<dbReference type="GO" id="GO:0005654">
    <property type="term" value="C:nucleoplasm"/>
    <property type="evidence" value="ECO:0000314"/>
    <property type="project" value="HPA"/>
</dbReference>
<dbReference type="GO" id="GO:0005634">
    <property type="term" value="C:nucleus"/>
    <property type="evidence" value="ECO:0000314"/>
    <property type="project" value="UniProtKB"/>
</dbReference>
<dbReference type="GO" id="GO:0000151">
    <property type="term" value="C:ubiquitin ligase complex"/>
    <property type="evidence" value="ECO:0000314"/>
    <property type="project" value="UniProtKB"/>
</dbReference>
<dbReference type="GO" id="GO:0042803">
    <property type="term" value="F:protein homodimerization activity"/>
    <property type="evidence" value="ECO:0007669"/>
    <property type="project" value="Ensembl"/>
</dbReference>
<dbReference type="GO" id="GO:0090263">
    <property type="term" value="P:positive regulation of canonical Wnt signaling pathway"/>
    <property type="evidence" value="ECO:0000315"/>
    <property type="project" value="UniProtKB"/>
</dbReference>
<dbReference type="GO" id="GO:0008284">
    <property type="term" value="P:positive regulation of cell population proliferation"/>
    <property type="evidence" value="ECO:0000315"/>
    <property type="project" value="UniProtKB"/>
</dbReference>
<dbReference type="GO" id="GO:0043161">
    <property type="term" value="P:proteasome-mediated ubiquitin-dependent protein catabolic process"/>
    <property type="evidence" value="ECO:0000318"/>
    <property type="project" value="GO_Central"/>
</dbReference>
<dbReference type="GO" id="GO:0016055">
    <property type="term" value="P:Wnt signaling pathway"/>
    <property type="evidence" value="ECO:0007669"/>
    <property type="project" value="UniProtKB-KW"/>
</dbReference>
<dbReference type="InterPro" id="IPR013144">
    <property type="entry name" value="CRA_dom"/>
</dbReference>
<dbReference type="InterPro" id="IPR024964">
    <property type="entry name" value="CTLH/CRA"/>
</dbReference>
<dbReference type="InterPro" id="IPR006595">
    <property type="entry name" value="CTLH_C"/>
</dbReference>
<dbReference type="InterPro" id="IPR006594">
    <property type="entry name" value="LisH"/>
</dbReference>
<dbReference type="InterPro" id="IPR050618">
    <property type="entry name" value="Ubq-SigPath_Reg"/>
</dbReference>
<dbReference type="PANTHER" id="PTHR12864">
    <property type="entry name" value="RAN BINDING PROTEIN 9-RELATED"/>
    <property type="match status" value="1"/>
</dbReference>
<dbReference type="Pfam" id="PF10607">
    <property type="entry name" value="CTLH"/>
    <property type="match status" value="1"/>
</dbReference>
<dbReference type="Pfam" id="PF08513">
    <property type="entry name" value="LisH"/>
    <property type="match status" value="1"/>
</dbReference>
<dbReference type="SMART" id="SM00757">
    <property type="entry name" value="CRA"/>
    <property type="match status" value="1"/>
</dbReference>
<dbReference type="SMART" id="SM00668">
    <property type="entry name" value="CTLH"/>
    <property type="match status" value="1"/>
</dbReference>
<dbReference type="SMART" id="SM00667">
    <property type="entry name" value="LisH"/>
    <property type="match status" value="1"/>
</dbReference>
<dbReference type="PROSITE" id="PS50897">
    <property type="entry name" value="CTLH"/>
    <property type="match status" value="1"/>
</dbReference>
<dbReference type="PROSITE" id="PS50896">
    <property type="entry name" value="LISH"/>
    <property type="match status" value="1"/>
</dbReference>
<feature type="chain" id="PRO_0000079411" description="Glucose-induced degradation protein 8 homolog">
    <location>
        <begin position="1"/>
        <end position="228"/>
    </location>
</feature>
<feature type="domain" description="LisH" evidence="3">
    <location>
        <begin position="25"/>
        <end position="57"/>
    </location>
</feature>
<feature type="domain" description="CTLH" evidence="2">
    <location>
        <begin position="63"/>
        <end position="120"/>
    </location>
</feature>
<feature type="region of interest" description="Interaction with CTNNB1" evidence="7">
    <location>
        <begin position="116"/>
        <end position="212"/>
    </location>
</feature>
<feature type="sequence conflict" description="In Ref. 5; AAH32120." evidence="12" ref="5">
    <original>V</original>
    <variation>L</variation>
    <location>
        <position position="59"/>
    </location>
</feature>
<feature type="helix" evidence="13">
    <location>
        <begin position="28"/>
        <end position="39"/>
    </location>
</feature>
<feature type="helix" evidence="13">
    <location>
        <begin position="45"/>
        <end position="50"/>
    </location>
</feature>
<feature type="turn" evidence="13">
    <location>
        <begin position="60"/>
        <end position="63"/>
    </location>
</feature>
<feature type="helix" evidence="13">
    <location>
        <begin position="65"/>
        <end position="74"/>
    </location>
</feature>
<feature type="turn" evidence="13">
    <location>
        <begin position="75"/>
        <end position="77"/>
    </location>
</feature>
<feature type="helix" evidence="13">
    <location>
        <begin position="79"/>
        <end position="86"/>
    </location>
</feature>
<feature type="turn" evidence="13">
    <location>
        <begin position="94"/>
        <end position="96"/>
    </location>
</feature>
<feature type="helix" evidence="13">
    <location>
        <begin position="98"/>
        <end position="113"/>
    </location>
</feature>
<feature type="helix" evidence="13">
    <location>
        <begin position="166"/>
        <end position="183"/>
    </location>
</feature>
<feature type="helix" evidence="13">
    <location>
        <begin position="191"/>
        <end position="207"/>
    </location>
</feature>
<feature type="turn" evidence="13">
    <location>
        <begin position="208"/>
        <end position="210"/>
    </location>
</feature>
<feature type="helix" evidence="13">
    <location>
        <begin position="217"/>
        <end position="219"/>
    </location>
</feature>